<accession>A9KPF4</accession>
<name>GPMI_LACP7</name>
<proteinExistence type="inferred from homology"/>
<gene>
    <name evidence="1" type="primary">gpmI</name>
    <name type="ordered locus">Cphy_2868</name>
</gene>
<reference key="1">
    <citation type="submission" date="2007-11" db="EMBL/GenBank/DDBJ databases">
        <title>Complete genome sequence of Clostridium phytofermentans ISDg.</title>
        <authorList>
            <person name="Leschine S.B."/>
            <person name="Warnick T.A."/>
            <person name="Blanchard J.L."/>
            <person name="Schnell D.J."/>
            <person name="Petit E.L."/>
            <person name="LaTouf W.G."/>
            <person name="Copeland A."/>
            <person name="Lucas S."/>
            <person name="Lapidus A."/>
            <person name="Barry K."/>
            <person name="Glavina del Rio T."/>
            <person name="Dalin E."/>
            <person name="Tice H."/>
            <person name="Pitluck S."/>
            <person name="Kiss H."/>
            <person name="Brettin T."/>
            <person name="Bruce D."/>
            <person name="Detter J.C."/>
            <person name="Han C."/>
            <person name="Kuske C."/>
            <person name="Schmutz J."/>
            <person name="Larimer F."/>
            <person name="Land M."/>
            <person name="Hauser L."/>
            <person name="Kyrpides N."/>
            <person name="Kim E.A."/>
            <person name="Richardson P."/>
        </authorList>
    </citation>
    <scope>NUCLEOTIDE SEQUENCE [LARGE SCALE GENOMIC DNA]</scope>
    <source>
        <strain>ATCC 700394 / DSM 18823 / ISDg</strain>
    </source>
</reference>
<evidence type="ECO:0000255" key="1">
    <source>
        <dbReference type="HAMAP-Rule" id="MF_01038"/>
    </source>
</evidence>
<comment type="function">
    <text evidence="1">Catalyzes the interconversion of 2-phosphoglycerate and 3-phosphoglycerate.</text>
</comment>
<comment type="catalytic activity">
    <reaction evidence="1">
        <text>(2R)-2-phosphoglycerate = (2R)-3-phosphoglycerate</text>
        <dbReference type="Rhea" id="RHEA:15901"/>
        <dbReference type="ChEBI" id="CHEBI:58272"/>
        <dbReference type="ChEBI" id="CHEBI:58289"/>
        <dbReference type="EC" id="5.4.2.12"/>
    </reaction>
</comment>
<comment type="cofactor">
    <cofactor evidence="1">
        <name>Mn(2+)</name>
        <dbReference type="ChEBI" id="CHEBI:29035"/>
    </cofactor>
    <text evidence="1">Binds 2 manganese ions per subunit.</text>
</comment>
<comment type="pathway">
    <text evidence="1">Carbohydrate degradation; glycolysis; pyruvate from D-glyceraldehyde 3-phosphate: step 3/5.</text>
</comment>
<comment type="subunit">
    <text evidence="1">Monomer.</text>
</comment>
<comment type="similarity">
    <text evidence="1">Belongs to the BPG-independent phosphoglycerate mutase family.</text>
</comment>
<dbReference type="EC" id="5.4.2.12" evidence="1"/>
<dbReference type="EMBL" id="CP000885">
    <property type="protein sequence ID" value="ABX43228.1"/>
    <property type="molecule type" value="Genomic_DNA"/>
</dbReference>
<dbReference type="RefSeq" id="WP_012200879.1">
    <property type="nucleotide sequence ID" value="NC_010001.1"/>
</dbReference>
<dbReference type="SMR" id="A9KPF4"/>
<dbReference type="STRING" id="357809.Cphy_2868"/>
<dbReference type="KEGG" id="cpy:Cphy_2868"/>
<dbReference type="eggNOG" id="COG0696">
    <property type="taxonomic scope" value="Bacteria"/>
</dbReference>
<dbReference type="HOGENOM" id="CLU_026099_2_0_9"/>
<dbReference type="OrthoDB" id="9800863at2"/>
<dbReference type="UniPathway" id="UPA00109">
    <property type="reaction ID" value="UER00186"/>
</dbReference>
<dbReference type="Proteomes" id="UP000000370">
    <property type="component" value="Chromosome"/>
</dbReference>
<dbReference type="GO" id="GO:0005829">
    <property type="term" value="C:cytosol"/>
    <property type="evidence" value="ECO:0007669"/>
    <property type="project" value="TreeGrafter"/>
</dbReference>
<dbReference type="GO" id="GO:0030145">
    <property type="term" value="F:manganese ion binding"/>
    <property type="evidence" value="ECO:0007669"/>
    <property type="project" value="UniProtKB-UniRule"/>
</dbReference>
<dbReference type="GO" id="GO:0004619">
    <property type="term" value="F:phosphoglycerate mutase activity"/>
    <property type="evidence" value="ECO:0007669"/>
    <property type="project" value="UniProtKB-EC"/>
</dbReference>
<dbReference type="GO" id="GO:0006007">
    <property type="term" value="P:glucose catabolic process"/>
    <property type="evidence" value="ECO:0007669"/>
    <property type="project" value="InterPro"/>
</dbReference>
<dbReference type="GO" id="GO:0006096">
    <property type="term" value="P:glycolytic process"/>
    <property type="evidence" value="ECO:0007669"/>
    <property type="project" value="UniProtKB-UniRule"/>
</dbReference>
<dbReference type="CDD" id="cd16010">
    <property type="entry name" value="iPGM"/>
    <property type="match status" value="1"/>
</dbReference>
<dbReference type="FunFam" id="3.40.1450.10:FF:000001">
    <property type="entry name" value="2,3-bisphosphoglycerate-independent phosphoglycerate mutase"/>
    <property type="match status" value="1"/>
</dbReference>
<dbReference type="Gene3D" id="3.40.720.10">
    <property type="entry name" value="Alkaline Phosphatase, subunit A"/>
    <property type="match status" value="1"/>
</dbReference>
<dbReference type="Gene3D" id="3.40.1450.10">
    <property type="entry name" value="BPG-independent phosphoglycerate mutase, domain B"/>
    <property type="match status" value="1"/>
</dbReference>
<dbReference type="HAMAP" id="MF_01038">
    <property type="entry name" value="GpmI"/>
    <property type="match status" value="1"/>
</dbReference>
<dbReference type="InterPro" id="IPR017850">
    <property type="entry name" value="Alkaline_phosphatase_core_sf"/>
</dbReference>
<dbReference type="InterPro" id="IPR011258">
    <property type="entry name" value="BPG-indep_PGM_N"/>
</dbReference>
<dbReference type="InterPro" id="IPR006124">
    <property type="entry name" value="Metalloenzyme"/>
</dbReference>
<dbReference type="InterPro" id="IPR036646">
    <property type="entry name" value="PGAM_B_sf"/>
</dbReference>
<dbReference type="InterPro" id="IPR005995">
    <property type="entry name" value="Pgm_bpd_ind"/>
</dbReference>
<dbReference type="NCBIfam" id="TIGR01307">
    <property type="entry name" value="pgm_bpd_ind"/>
    <property type="match status" value="1"/>
</dbReference>
<dbReference type="PANTHER" id="PTHR31637">
    <property type="entry name" value="2,3-BISPHOSPHOGLYCERATE-INDEPENDENT PHOSPHOGLYCERATE MUTASE"/>
    <property type="match status" value="1"/>
</dbReference>
<dbReference type="PANTHER" id="PTHR31637:SF0">
    <property type="entry name" value="2,3-BISPHOSPHOGLYCERATE-INDEPENDENT PHOSPHOGLYCERATE MUTASE"/>
    <property type="match status" value="1"/>
</dbReference>
<dbReference type="Pfam" id="PF06415">
    <property type="entry name" value="iPGM_N"/>
    <property type="match status" value="1"/>
</dbReference>
<dbReference type="Pfam" id="PF01676">
    <property type="entry name" value="Metalloenzyme"/>
    <property type="match status" value="1"/>
</dbReference>
<dbReference type="PIRSF" id="PIRSF001492">
    <property type="entry name" value="IPGAM"/>
    <property type="match status" value="1"/>
</dbReference>
<dbReference type="SUPFAM" id="SSF64158">
    <property type="entry name" value="2,3-Bisphosphoglycerate-independent phosphoglycerate mutase, substrate-binding domain"/>
    <property type="match status" value="1"/>
</dbReference>
<dbReference type="SUPFAM" id="SSF53649">
    <property type="entry name" value="Alkaline phosphatase-like"/>
    <property type="match status" value="1"/>
</dbReference>
<protein>
    <recommendedName>
        <fullName evidence="1">2,3-bisphosphoglycerate-independent phosphoglycerate mutase</fullName>
        <shortName evidence="1">BPG-independent PGAM</shortName>
        <shortName evidence="1">Phosphoglyceromutase</shortName>
        <shortName evidence="1">iPGM</shortName>
        <ecNumber evidence="1">5.4.2.12</ecNumber>
    </recommendedName>
</protein>
<organism>
    <name type="scientific">Lachnoclostridium phytofermentans (strain ATCC 700394 / DSM 18823 / ISDg)</name>
    <name type="common">Clostridium phytofermentans</name>
    <dbReference type="NCBI Taxonomy" id="357809"/>
    <lineage>
        <taxon>Bacteria</taxon>
        <taxon>Bacillati</taxon>
        <taxon>Bacillota</taxon>
        <taxon>Clostridia</taxon>
        <taxon>Lachnospirales</taxon>
        <taxon>Lachnospiraceae</taxon>
    </lineage>
</organism>
<sequence length="514" mass="56245">MSKKPTVLMILDGYGLNEKTEGNAIALAKKPVLDKLMKDYPFVKGNASGMAVGLPEGQMGNSEVGHLNMGAGRIVYQELTRITKEIQDGDFFENTQLIKAVENCKKNNTALHLFGLLSDGGVHSHITHLYGLLELAKRHGLENVYVHAFLDGRDTAPTSGKSFMEALEAKMAELGVGRIASVTGRYYVMDRDNRWDRVEKAYAALVDGEGVEAANAVEAVAASYAEGVNDEFVLPTVVVKDGKAIAPIKANDSIIFFNFRPDRAREITRAFCTDDFDGFVRKSGRLPLTYVCFSEYDVTIPNKSVAFEKVSITNTFGEYLAEHGKTQARIAETEKYAHVTFFFNGGVEAPNEGEDRILVNSPKVATYDLQPEMSANAVADKLVEAITSLKYDVIIVNFANPDMVGHTGISDAAIKAVEAVDACVGRAYDALLSVDGQMFICADHGNAEQLVDYTNGEPFTAHTTNPVPFILINYDDSYTLREGGCLADIIPTLIEMMKMEQPKEMTGKSLLIKK</sequence>
<feature type="chain" id="PRO_1000084300" description="2,3-bisphosphoglycerate-independent phosphoglycerate mutase">
    <location>
        <begin position="1"/>
        <end position="514"/>
    </location>
</feature>
<feature type="active site" description="Phosphoserine intermediate" evidence="1">
    <location>
        <position position="62"/>
    </location>
</feature>
<feature type="binding site" evidence="1">
    <location>
        <position position="12"/>
    </location>
    <ligand>
        <name>Mn(2+)</name>
        <dbReference type="ChEBI" id="CHEBI:29035"/>
        <label>2</label>
    </ligand>
</feature>
<feature type="binding site" evidence="1">
    <location>
        <position position="62"/>
    </location>
    <ligand>
        <name>Mn(2+)</name>
        <dbReference type="ChEBI" id="CHEBI:29035"/>
        <label>2</label>
    </ligand>
</feature>
<feature type="binding site" evidence="1">
    <location>
        <position position="123"/>
    </location>
    <ligand>
        <name>substrate</name>
    </ligand>
</feature>
<feature type="binding site" evidence="1">
    <location>
        <begin position="153"/>
        <end position="154"/>
    </location>
    <ligand>
        <name>substrate</name>
    </ligand>
</feature>
<feature type="binding site" evidence="1">
    <location>
        <position position="185"/>
    </location>
    <ligand>
        <name>substrate</name>
    </ligand>
</feature>
<feature type="binding site" evidence="1">
    <location>
        <position position="191"/>
    </location>
    <ligand>
        <name>substrate</name>
    </ligand>
</feature>
<feature type="binding site" evidence="1">
    <location>
        <begin position="260"/>
        <end position="263"/>
    </location>
    <ligand>
        <name>substrate</name>
    </ligand>
</feature>
<feature type="binding site" evidence="1">
    <location>
        <position position="335"/>
    </location>
    <ligand>
        <name>substrate</name>
    </ligand>
</feature>
<feature type="binding site" evidence="1">
    <location>
        <position position="402"/>
    </location>
    <ligand>
        <name>Mn(2+)</name>
        <dbReference type="ChEBI" id="CHEBI:29035"/>
        <label>1</label>
    </ligand>
</feature>
<feature type="binding site" evidence="1">
    <location>
        <position position="406"/>
    </location>
    <ligand>
        <name>Mn(2+)</name>
        <dbReference type="ChEBI" id="CHEBI:29035"/>
        <label>1</label>
    </ligand>
</feature>
<feature type="binding site" evidence="1">
    <location>
        <position position="443"/>
    </location>
    <ligand>
        <name>Mn(2+)</name>
        <dbReference type="ChEBI" id="CHEBI:29035"/>
        <label>2</label>
    </ligand>
</feature>
<feature type="binding site" evidence="1">
    <location>
        <position position="444"/>
    </location>
    <ligand>
        <name>Mn(2+)</name>
        <dbReference type="ChEBI" id="CHEBI:29035"/>
        <label>2</label>
    </ligand>
</feature>
<feature type="binding site" evidence="1">
    <location>
        <position position="462"/>
    </location>
    <ligand>
        <name>Mn(2+)</name>
        <dbReference type="ChEBI" id="CHEBI:29035"/>
        <label>1</label>
    </ligand>
</feature>
<keyword id="KW-0324">Glycolysis</keyword>
<keyword id="KW-0413">Isomerase</keyword>
<keyword id="KW-0464">Manganese</keyword>
<keyword id="KW-0479">Metal-binding</keyword>
<keyword id="KW-1185">Reference proteome</keyword>